<gene>
    <name evidence="1" type="primary">menD</name>
    <name type="ordered locus">SaurJH9_1102</name>
</gene>
<organism>
    <name type="scientific">Staphylococcus aureus (strain JH9)</name>
    <dbReference type="NCBI Taxonomy" id="359786"/>
    <lineage>
        <taxon>Bacteria</taxon>
        <taxon>Bacillati</taxon>
        <taxon>Bacillota</taxon>
        <taxon>Bacilli</taxon>
        <taxon>Bacillales</taxon>
        <taxon>Staphylococcaceae</taxon>
        <taxon>Staphylococcus</taxon>
    </lineage>
</organism>
<sequence length="557" mass="63091">MGNHKAALTKQVFTFASELYAYGVREVVISPGSRSTPLALAFEAHPNIKTWIHPDERSAAFFAVGLIKGSERPVAILCTSGTAAANYTPAIAESQISRIPLIVLTSDRPHELRSVGAPQAINQVNMFNNYVSYEFDMPIADDSKETINAIYYQMQIASQYLYGPHKGPIHFNLPFRDPLTPDLNATELLTSEMKILPHYQKSIDASALRHILNKKKGLIIVGDMQHQEVDQILTYSTIYDLPILADPLSHLRKFDHPNVICTYDLLFRSGLDLNVDFVIRVGKPVISKKLNQWLKKTDAFQILVQNNDKIDVFPIAPDISYEISANDFFRSLMEDTTINRVSWLEKWQCLEKKGRKEIKCYLEQATDESAFVGELIKKTSEKDALFISNSMPIRDVDNLLLNKNIDVYANRGANGIDGIVSTALGMAVHKRITLLIGDLSFYHDMNGLLMSKLNNIQMNIVLLNNDGGGIFSYLPQKESATDYFERLFGTPTGLDFEYTAKLYQFDFKRFNSVSEFKNATLLSETSTIYELITNREDNFKQHQILYQKLSEMIHDTL</sequence>
<evidence type="ECO:0000255" key="1">
    <source>
        <dbReference type="HAMAP-Rule" id="MF_01659"/>
    </source>
</evidence>
<keyword id="KW-0460">Magnesium</keyword>
<keyword id="KW-0464">Manganese</keyword>
<keyword id="KW-0474">Menaquinone biosynthesis</keyword>
<keyword id="KW-0479">Metal-binding</keyword>
<keyword id="KW-0786">Thiamine pyrophosphate</keyword>
<keyword id="KW-0808">Transferase</keyword>
<comment type="function">
    <text evidence="1">Catalyzes the thiamine diphosphate-dependent decarboxylation of 2-oxoglutarate and the subsequent addition of the resulting succinic semialdehyde-thiamine pyrophosphate anion to isochorismate to yield 2-succinyl-5-enolpyruvyl-6-hydroxy-3-cyclohexene-1-carboxylate (SEPHCHC).</text>
</comment>
<comment type="catalytic activity">
    <reaction evidence="1">
        <text>isochorismate + 2-oxoglutarate + H(+) = 5-enolpyruvoyl-6-hydroxy-2-succinyl-cyclohex-3-ene-1-carboxylate + CO2</text>
        <dbReference type="Rhea" id="RHEA:25593"/>
        <dbReference type="ChEBI" id="CHEBI:15378"/>
        <dbReference type="ChEBI" id="CHEBI:16526"/>
        <dbReference type="ChEBI" id="CHEBI:16810"/>
        <dbReference type="ChEBI" id="CHEBI:29780"/>
        <dbReference type="ChEBI" id="CHEBI:58818"/>
        <dbReference type="EC" id="2.2.1.9"/>
    </reaction>
</comment>
<comment type="cofactor">
    <cofactor evidence="1">
        <name>Mg(2+)</name>
        <dbReference type="ChEBI" id="CHEBI:18420"/>
    </cofactor>
    <cofactor evidence="1">
        <name>Mn(2+)</name>
        <dbReference type="ChEBI" id="CHEBI:29035"/>
    </cofactor>
</comment>
<comment type="cofactor">
    <cofactor evidence="1">
        <name>thiamine diphosphate</name>
        <dbReference type="ChEBI" id="CHEBI:58937"/>
    </cofactor>
    <text evidence="1">Binds 1 thiamine pyrophosphate per subunit.</text>
</comment>
<comment type="pathway">
    <text evidence="1">Quinol/quinone metabolism; 1,4-dihydroxy-2-naphthoate biosynthesis; 1,4-dihydroxy-2-naphthoate from chorismate: step 2/7.</text>
</comment>
<comment type="pathway">
    <text evidence="1">Quinol/quinone metabolism; menaquinone biosynthesis.</text>
</comment>
<comment type="subunit">
    <text evidence="1">Homodimer.</text>
</comment>
<comment type="similarity">
    <text evidence="1">Belongs to the TPP enzyme family. MenD subfamily.</text>
</comment>
<proteinExistence type="inferred from homology"/>
<reference key="1">
    <citation type="submission" date="2007-05" db="EMBL/GenBank/DDBJ databases">
        <title>Complete sequence of chromosome of Staphylococcus aureus subsp. aureus JH9.</title>
        <authorList>
            <consortium name="US DOE Joint Genome Institute"/>
            <person name="Copeland A."/>
            <person name="Lucas S."/>
            <person name="Lapidus A."/>
            <person name="Barry K."/>
            <person name="Detter J.C."/>
            <person name="Glavina del Rio T."/>
            <person name="Hammon N."/>
            <person name="Israni S."/>
            <person name="Pitluck S."/>
            <person name="Chain P."/>
            <person name="Malfatti S."/>
            <person name="Shin M."/>
            <person name="Vergez L."/>
            <person name="Schmutz J."/>
            <person name="Larimer F."/>
            <person name="Land M."/>
            <person name="Hauser L."/>
            <person name="Kyrpides N."/>
            <person name="Kim E."/>
            <person name="Tomasz A."/>
            <person name="Richardson P."/>
        </authorList>
    </citation>
    <scope>NUCLEOTIDE SEQUENCE [LARGE SCALE GENOMIC DNA]</scope>
    <source>
        <strain>JH9</strain>
    </source>
</reference>
<feature type="chain" id="PRO_0000341852" description="2-succinyl-5-enolpyruvyl-6-hydroxy-3-cyclohexene-1-carboxylate synthase">
    <location>
        <begin position="1"/>
        <end position="557"/>
    </location>
</feature>
<accession>A5IRS9</accession>
<dbReference type="EC" id="2.2.1.9" evidence="1"/>
<dbReference type="EMBL" id="CP000703">
    <property type="protein sequence ID" value="ABQ48902.1"/>
    <property type="molecule type" value="Genomic_DNA"/>
</dbReference>
<dbReference type="RefSeq" id="WP_000526694.1">
    <property type="nucleotide sequence ID" value="NC_009487.1"/>
</dbReference>
<dbReference type="SMR" id="A5IRS9"/>
<dbReference type="KEGG" id="saj:SaurJH9_1102"/>
<dbReference type="HOGENOM" id="CLU_006051_3_0_9"/>
<dbReference type="UniPathway" id="UPA00079"/>
<dbReference type="UniPathway" id="UPA01057">
    <property type="reaction ID" value="UER00164"/>
</dbReference>
<dbReference type="GO" id="GO:0070204">
    <property type="term" value="F:2-succinyl-5-enolpyruvyl-6-hydroxy-3-cyclohexene-1-carboxylic-acid synthase activity"/>
    <property type="evidence" value="ECO:0007669"/>
    <property type="project" value="UniProtKB-UniRule"/>
</dbReference>
<dbReference type="GO" id="GO:0000287">
    <property type="term" value="F:magnesium ion binding"/>
    <property type="evidence" value="ECO:0007669"/>
    <property type="project" value="UniProtKB-UniRule"/>
</dbReference>
<dbReference type="GO" id="GO:0030145">
    <property type="term" value="F:manganese ion binding"/>
    <property type="evidence" value="ECO:0007669"/>
    <property type="project" value="UniProtKB-UniRule"/>
</dbReference>
<dbReference type="GO" id="GO:0030976">
    <property type="term" value="F:thiamine pyrophosphate binding"/>
    <property type="evidence" value="ECO:0007669"/>
    <property type="project" value="UniProtKB-UniRule"/>
</dbReference>
<dbReference type="GO" id="GO:0009234">
    <property type="term" value="P:menaquinone biosynthetic process"/>
    <property type="evidence" value="ECO:0007669"/>
    <property type="project" value="UniProtKB-UniRule"/>
</dbReference>
<dbReference type="CDD" id="cd07037">
    <property type="entry name" value="TPP_PYR_MenD"/>
    <property type="match status" value="1"/>
</dbReference>
<dbReference type="CDD" id="cd02009">
    <property type="entry name" value="TPP_SHCHC_synthase"/>
    <property type="match status" value="1"/>
</dbReference>
<dbReference type="Gene3D" id="3.40.50.970">
    <property type="match status" value="2"/>
</dbReference>
<dbReference type="Gene3D" id="3.40.50.1220">
    <property type="entry name" value="TPP-binding domain"/>
    <property type="match status" value="1"/>
</dbReference>
<dbReference type="HAMAP" id="MF_01659">
    <property type="entry name" value="MenD"/>
    <property type="match status" value="1"/>
</dbReference>
<dbReference type="InterPro" id="IPR004433">
    <property type="entry name" value="MenaQ_synth_MenD"/>
</dbReference>
<dbReference type="InterPro" id="IPR032264">
    <property type="entry name" value="MenD_middle"/>
</dbReference>
<dbReference type="InterPro" id="IPR029061">
    <property type="entry name" value="THDP-binding"/>
</dbReference>
<dbReference type="InterPro" id="IPR012001">
    <property type="entry name" value="Thiamin_PyroP_enz_TPP-bd_dom"/>
</dbReference>
<dbReference type="InterPro" id="IPR011766">
    <property type="entry name" value="TPP_enzyme_TPP-bd"/>
</dbReference>
<dbReference type="NCBIfam" id="TIGR00173">
    <property type="entry name" value="menD"/>
    <property type="match status" value="1"/>
</dbReference>
<dbReference type="PANTHER" id="PTHR42916">
    <property type="entry name" value="2-SUCCINYL-5-ENOLPYRUVYL-6-HYDROXY-3-CYCLOHEXENE-1-CARBOXYLATE SYNTHASE"/>
    <property type="match status" value="1"/>
</dbReference>
<dbReference type="PANTHER" id="PTHR42916:SF1">
    <property type="entry name" value="PROTEIN PHYLLO, CHLOROPLASTIC"/>
    <property type="match status" value="1"/>
</dbReference>
<dbReference type="Pfam" id="PF02775">
    <property type="entry name" value="TPP_enzyme_C"/>
    <property type="match status" value="1"/>
</dbReference>
<dbReference type="Pfam" id="PF16582">
    <property type="entry name" value="TPP_enzyme_M_2"/>
    <property type="match status" value="1"/>
</dbReference>
<dbReference type="Pfam" id="PF02776">
    <property type="entry name" value="TPP_enzyme_N"/>
    <property type="match status" value="1"/>
</dbReference>
<dbReference type="PIRSF" id="PIRSF004983">
    <property type="entry name" value="MenD"/>
    <property type="match status" value="1"/>
</dbReference>
<dbReference type="SUPFAM" id="SSF52518">
    <property type="entry name" value="Thiamin diphosphate-binding fold (THDP-binding)"/>
    <property type="match status" value="2"/>
</dbReference>
<name>MEND_STAA9</name>
<protein>
    <recommendedName>
        <fullName evidence="1">2-succinyl-5-enolpyruvyl-6-hydroxy-3-cyclohexene-1-carboxylate synthase</fullName>
        <shortName evidence="1">SEPHCHC synthase</shortName>
        <ecNumber evidence="1">2.2.1.9</ecNumber>
    </recommendedName>
    <alternativeName>
        <fullName evidence="1">Menaquinone biosynthesis protein MenD</fullName>
    </alternativeName>
</protein>